<accession>B5X3Z6</accession>
<protein>
    <recommendedName>
        <fullName evidence="2">Lissencephaly-1 homolog A</fullName>
    </recommendedName>
</protein>
<feature type="initiator methionine" description="Removed" evidence="2">
    <location>
        <position position="1"/>
    </location>
</feature>
<feature type="chain" id="PRO_0000405035" description="Lissencephaly-1 homolog A">
    <location>
        <begin position="2"/>
        <end position="410"/>
    </location>
</feature>
<feature type="domain" description="LisH" evidence="2">
    <location>
        <begin position="7"/>
        <end position="39"/>
    </location>
</feature>
<feature type="repeat" description="WD 1">
    <location>
        <begin position="106"/>
        <end position="147"/>
    </location>
</feature>
<feature type="repeat" description="WD 2">
    <location>
        <begin position="148"/>
        <end position="187"/>
    </location>
</feature>
<feature type="repeat" description="WD 3">
    <location>
        <begin position="190"/>
        <end position="229"/>
    </location>
</feature>
<feature type="repeat" description="WD 4">
    <location>
        <begin position="232"/>
        <end position="271"/>
    </location>
</feature>
<feature type="repeat" description="WD 5">
    <location>
        <begin position="274"/>
        <end position="333"/>
    </location>
</feature>
<feature type="repeat" description="WD 6">
    <location>
        <begin position="336"/>
        <end position="375"/>
    </location>
</feature>
<feature type="repeat" description="WD 7">
    <location>
        <begin position="378"/>
        <end position="410"/>
    </location>
</feature>
<feature type="coiled-coil region" evidence="2">
    <location>
        <begin position="56"/>
        <end position="82"/>
    </location>
</feature>
<sequence>MVLSQRQRDELNRAIADYLRSNGYEEAYSTFKKEAELDMNEELDKKYAGLLEKKWTSVIRLQKKVMELESKLNEAKEEITLGGPIAQKRDPKEWIPRPPEKYALSGHRSPVTRVIFHPVFSVMVSASEDATIKVWDYETGDFERTLKGHTDSVQDISFDHTGKLLASCSADMTIKLWDFQGFECIRTMHGHDHNVSSVAIMPNGDHIVSASRDKTIKMWEVATGYCVKTFTGHREWVRMVRPNQDGTLIASCSNDQTVRVWVVASKECKAELREHEHVVECISWAPESAHPTILEATGSESKKSGKPGPFLLSGSRDKTIKMWDVSIGMCLMTLVGHDNWVRGMLVHPGGKFILSCADDKTLRIWDYKNKRCMKTLGAHEHFVTSLDFHKNAPYVVTGSVDQTVKVWECR</sequence>
<organism>
    <name type="scientific">Salmo salar</name>
    <name type="common">Atlantic salmon</name>
    <dbReference type="NCBI Taxonomy" id="8030"/>
    <lineage>
        <taxon>Eukaryota</taxon>
        <taxon>Metazoa</taxon>
        <taxon>Chordata</taxon>
        <taxon>Craniata</taxon>
        <taxon>Vertebrata</taxon>
        <taxon>Euteleostomi</taxon>
        <taxon>Actinopterygii</taxon>
        <taxon>Neopterygii</taxon>
        <taxon>Teleostei</taxon>
        <taxon>Protacanthopterygii</taxon>
        <taxon>Salmoniformes</taxon>
        <taxon>Salmonidae</taxon>
        <taxon>Salmoninae</taxon>
        <taxon>Salmo</taxon>
    </lineage>
</organism>
<proteinExistence type="evidence at transcript level"/>
<gene>
    <name type="primary">pafah1b1-1</name>
    <name evidence="2" type="synonym">lis1-1</name>
</gene>
<evidence type="ECO:0000250" key="1">
    <source>
        <dbReference type="UniProtKB" id="P43033"/>
    </source>
</evidence>
<evidence type="ECO:0000255" key="2">
    <source>
        <dbReference type="HAMAP-Rule" id="MF_03141"/>
    </source>
</evidence>
<reference key="1">
    <citation type="journal article" date="2010" name="BMC Genomics">
        <title>Salmo salar and Esox lucius full-length cDNA sequences reveal changes in evolutionary pressures on a post-tetraploidization genome.</title>
        <authorList>
            <person name="Leong J.S."/>
            <person name="Jantzen S.G."/>
            <person name="von Schalburg K.R."/>
            <person name="Cooper G.A."/>
            <person name="Messmer A.M."/>
            <person name="Liao N.Y."/>
            <person name="Munro S."/>
            <person name="Moore R."/>
            <person name="Holt R.A."/>
            <person name="Jones S.J."/>
            <person name="Davidson W.S."/>
            <person name="Koop B.F."/>
        </authorList>
    </citation>
    <scope>NUCLEOTIDE SEQUENCE [LARGE SCALE MRNA]</scope>
    <source>
        <tissue>Brain</tissue>
    </source>
</reference>
<comment type="function">
    <text evidence="1 2">Regulatory subunit (beta subunit) of the cytosolic type I platelet-activating factor (PAF) acetylhydrolase (PAF-AH (I)), an enzyme that catalyzes the hydrolyze of the acetyl group at the sn-2 position of PAF and its analogs and participates in PAF inactivation. Regulates the PAF-AH (I) activity in a catalytic dimer composition-dependent manner (By similarity). Positively regulates the activity of the minus-end directed microtubule motor protein dynein. May enhance dynein-mediated microtubule sliding by targeting dynein to the microtubule plus end. Required for several dynein- and microtubule-dependent processes such as the maintenance of Golgi integrity, the peripheral transport of microtubule fragments and the coupling of the nucleus and centrosome. May be required for proliferation of neuronal precursors and neuronal migration.</text>
</comment>
<comment type="subunit">
    <text evidence="1 2">Can self-associate. Component of the cytosolic PAF-AH (I) heterotetrameric enzyme, which is composed of PAFAH1B1 (beta), PAFAH1B2 (alpha2) and PAFAH1B3 (alpha1) subunits. The catalytic activity of the enzyme resides in the alpha1 (PAFAH1B3) and alpha2 (PAFAH1B2) subunits, whereas the beta subunit (PAFAH1B1) has regulatory activity. Trimer formation is not essential for the catalytic activity (By similarity). Interacts with dynein, dynactin, nde1 and ndel1.</text>
</comment>
<comment type="subcellular location">
    <subcellularLocation>
        <location evidence="2">Cytoplasm</location>
        <location evidence="2">Cytoskeleton</location>
    </subcellularLocation>
    <subcellularLocation>
        <location evidence="2">Cytoplasm</location>
        <location evidence="2">Cytoskeleton</location>
        <location evidence="2">Microtubule organizing center</location>
        <location evidence="2">Centrosome</location>
    </subcellularLocation>
    <text evidence="2">Localizes to the plus end of microtubules and to the centrosome.</text>
</comment>
<comment type="domain">
    <text evidence="2">Dimerization mediated by the LisH domain may be required to activate dynein.</text>
</comment>
<comment type="similarity">
    <text evidence="2">Belongs to the WD repeat LIS1/nudF family.</text>
</comment>
<dbReference type="EMBL" id="BT045765">
    <property type="protein sequence ID" value="ACI34027.1"/>
    <property type="molecule type" value="mRNA"/>
</dbReference>
<dbReference type="RefSeq" id="NP_001133855.1">
    <property type="nucleotide sequence ID" value="NM_001140383.1"/>
</dbReference>
<dbReference type="RefSeq" id="XP_014069688.1">
    <property type="nucleotide sequence ID" value="XM_014214213.1"/>
</dbReference>
<dbReference type="RefSeq" id="XP_014069689.1">
    <property type="nucleotide sequence ID" value="XM_014214214.1"/>
</dbReference>
<dbReference type="RefSeq" id="XP_014069690.1">
    <property type="nucleotide sequence ID" value="XM_014214215.1"/>
</dbReference>
<dbReference type="SMR" id="B5X3Z6"/>
<dbReference type="STRING" id="8030.ENSSSAP00000101953"/>
<dbReference type="PaxDb" id="8030-ENSSSAP00000101953"/>
<dbReference type="Ensembl" id="ENSSSAT00020152779">
    <property type="protein sequence ID" value="ENSSSAP00020117086"/>
    <property type="gene ID" value="ENSSSAG00020065917"/>
</dbReference>
<dbReference type="Ensembl" id="ENSSSAT00070060692">
    <property type="protein sequence ID" value="ENSSSAP00070058160"/>
    <property type="gene ID" value="ENSSSAG00070037752"/>
</dbReference>
<dbReference type="Ensembl" id="ENSSSAT00075065840">
    <property type="protein sequence ID" value="ENSSSAP00075046596"/>
    <property type="gene ID" value="ENSSSAG00075031638"/>
</dbReference>
<dbReference type="GeneID" id="100195354"/>
<dbReference type="KEGG" id="sasa:100195354"/>
<dbReference type="CTD" id="100195354"/>
<dbReference type="OMA" id="TTHCIKV"/>
<dbReference type="OrthoDB" id="382368at7898"/>
<dbReference type="Proteomes" id="UP000087266">
    <property type="component" value="Chromosome ssa09"/>
</dbReference>
<dbReference type="Bgee" id="ENSSSAG00000075012">
    <property type="expression patterns" value="Expressed in ovary and 27 other cell types or tissues"/>
</dbReference>
<dbReference type="GO" id="GO:0008247">
    <property type="term" value="C:1-alkyl-2-acetylglycerophosphocholine esterase complex"/>
    <property type="evidence" value="ECO:0000250"/>
    <property type="project" value="UniProtKB"/>
</dbReference>
<dbReference type="GO" id="GO:0005813">
    <property type="term" value="C:centrosome"/>
    <property type="evidence" value="ECO:0007669"/>
    <property type="project" value="UniProtKB-SubCell"/>
</dbReference>
<dbReference type="GO" id="GO:0005737">
    <property type="term" value="C:cytoplasm"/>
    <property type="evidence" value="ECO:0007669"/>
    <property type="project" value="UniProtKB-UniRule"/>
</dbReference>
<dbReference type="GO" id="GO:0005874">
    <property type="term" value="C:microtubule"/>
    <property type="evidence" value="ECO:0007669"/>
    <property type="project" value="UniProtKB-KW"/>
</dbReference>
<dbReference type="GO" id="GO:0005875">
    <property type="term" value="C:microtubule associated complex"/>
    <property type="evidence" value="ECO:0007669"/>
    <property type="project" value="UniProtKB-UniRule"/>
</dbReference>
<dbReference type="GO" id="GO:0070840">
    <property type="term" value="F:dynein complex binding"/>
    <property type="evidence" value="ECO:0007669"/>
    <property type="project" value="UniProtKB-UniRule"/>
</dbReference>
<dbReference type="GO" id="GO:0046982">
    <property type="term" value="F:protein heterodimerization activity"/>
    <property type="evidence" value="ECO:0000250"/>
    <property type="project" value="UniProtKB"/>
</dbReference>
<dbReference type="GO" id="GO:0030154">
    <property type="term" value="P:cell differentiation"/>
    <property type="evidence" value="ECO:0007669"/>
    <property type="project" value="UniProtKB-KW"/>
</dbReference>
<dbReference type="GO" id="GO:0051301">
    <property type="term" value="P:cell division"/>
    <property type="evidence" value="ECO:0007669"/>
    <property type="project" value="UniProtKB-KW"/>
</dbReference>
<dbReference type="GO" id="GO:0000132">
    <property type="term" value="P:establishment of mitotic spindle orientation"/>
    <property type="evidence" value="ECO:0007669"/>
    <property type="project" value="UniProtKB-UniRule"/>
</dbReference>
<dbReference type="GO" id="GO:0051012">
    <property type="term" value="P:microtubule sliding"/>
    <property type="evidence" value="ECO:0007669"/>
    <property type="project" value="UniProtKB-UniRule"/>
</dbReference>
<dbReference type="GO" id="GO:0007399">
    <property type="term" value="P:nervous system development"/>
    <property type="evidence" value="ECO:0007669"/>
    <property type="project" value="UniProtKB-UniRule"/>
</dbReference>
<dbReference type="GO" id="GO:0038026">
    <property type="term" value="P:reelin-mediated signaling pathway"/>
    <property type="evidence" value="ECO:0000250"/>
    <property type="project" value="UniProtKB"/>
</dbReference>
<dbReference type="CDD" id="cd00200">
    <property type="entry name" value="WD40"/>
    <property type="match status" value="1"/>
</dbReference>
<dbReference type="FunFam" id="2.130.10.10:FF:000038">
    <property type="entry name" value="Lissencephaly-1 homolog B"/>
    <property type="match status" value="1"/>
</dbReference>
<dbReference type="FunFam" id="1.20.960.30:FF:000002">
    <property type="entry name" value="Platelet-activating factor acetylhydrolase ib"/>
    <property type="match status" value="1"/>
</dbReference>
<dbReference type="Gene3D" id="1.20.960.30">
    <property type="match status" value="1"/>
</dbReference>
<dbReference type="Gene3D" id="2.130.10.10">
    <property type="entry name" value="YVTN repeat-like/Quinoprotein amine dehydrogenase"/>
    <property type="match status" value="1"/>
</dbReference>
<dbReference type="HAMAP" id="MF_03141">
    <property type="entry name" value="lis1"/>
    <property type="match status" value="1"/>
</dbReference>
<dbReference type="InterPro" id="IPR017252">
    <property type="entry name" value="Dynein_regulator_LIS1"/>
</dbReference>
<dbReference type="InterPro" id="IPR020472">
    <property type="entry name" value="G-protein_beta_WD-40_rep"/>
</dbReference>
<dbReference type="InterPro" id="IPR037190">
    <property type="entry name" value="LIS1_N"/>
</dbReference>
<dbReference type="InterPro" id="IPR006594">
    <property type="entry name" value="LisH"/>
</dbReference>
<dbReference type="InterPro" id="IPR056795">
    <property type="entry name" value="PAC1-like_LisH-like_dom"/>
</dbReference>
<dbReference type="InterPro" id="IPR015943">
    <property type="entry name" value="WD40/YVTN_repeat-like_dom_sf"/>
</dbReference>
<dbReference type="InterPro" id="IPR019775">
    <property type="entry name" value="WD40_repeat_CS"/>
</dbReference>
<dbReference type="InterPro" id="IPR036322">
    <property type="entry name" value="WD40_repeat_dom_sf"/>
</dbReference>
<dbReference type="InterPro" id="IPR001680">
    <property type="entry name" value="WD40_rpt"/>
</dbReference>
<dbReference type="InterPro" id="IPR050349">
    <property type="entry name" value="WD_LIS1/nudF_dynein_reg"/>
</dbReference>
<dbReference type="PANTHER" id="PTHR44129">
    <property type="entry name" value="WD REPEAT-CONTAINING PROTEIN POP1"/>
    <property type="match status" value="1"/>
</dbReference>
<dbReference type="Pfam" id="PF24951">
    <property type="entry name" value="LisH_PAC1"/>
    <property type="match status" value="1"/>
</dbReference>
<dbReference type="Pfam" id="PF00400">
    <property type="entry name" value="WD40"/>
    <property type="match status" value="7"/>
</dbReference>
<dbReference type="PIRSF" id="PIRSF037647">
    <property type="entry name" value="Dynein_regulator_Lis1"/>
    <property type="match status" value="1"/>
</dbReference>
<dbReference type="PRINTS" id="PR00320">
    <property type="entry name" value="GPROTEINBRPT"/>
</dbReference>
<dbReference type="SMART" id="SM00667">
    <property type="entry name" value="LisH"/>
    <property type="match status" value="1"/>
</dbReference>
<dbReference type="SMART" id="SM00320">
    <property type="entry name" value="WD40"/>
    <property type="match status" value="7"/>
</dbReference>
<dbReference type="SUPFAM" id="SSF109925">
    <property type="entry name" value="Lissencephaly-1 protein (Lis-1, PAF-AH alpha) N-terminal domain"/>
    <property type="match status" value="1"/>
</dbReference>
<dbReference type="SUPFAM" id="SSF50978">
    <property type="entry name" value="WD40 repeat-like"/>
    <property type="match status" value="1"/>
</dbReference>
<dbReference type="PROSITE" id="PS50896">
    <property type="entry name" value="LISH"/>
    <property type="match status" value="1"/>
</dbReference>
<dbReference type="PROSITE" id="PS00678">
    <property type="entry name" value="WD_REPEATS_1"/>
    <property type="match status" value="4"/>
</dbReference>
<dbReference type="PROSITE" id="PS50082">
    <property type="entry name" value="WD_REPEATS_2"/>
    <property type="match status" value="7"/>
</dbReference>
<dbReference type="PROSITE" id="PS50294">
    <property type="entry name" value="WD_REPEATS_REGION"/>
    <property type="match status" value="1"/>
</dbReference>
<keyword id="KW-0131">Cell cycle</keyword>
<keyword id="KW-0132">Cell division</keyword>
<keyword id="KW-0175">Coiled coil</keyword>
<keyword id="KW-0963">Cytoplasm</keyword>
<keyword id="KW-0206">Cytoskeleton</keyword>
<keyword id="KW-0217">Developmental protein</keyword>
<keyword id="KW-0221">Differentiation</keyword>
<keyword id="KW-0493">Microtubule</keyword>
<keyword id="KW-0498">Mitosis</keyword>
<keyword id="KW-0524">Neurogenesis</keyword>
<keyword id="KW-1185">Reference proteome</keyword>
<keyword id="KW-0677">Repeat</keyword>
<keyword id="KW-0813">Transport</keyword>
<keyword id="KW-0853">WD repeat</keyword>
<name>LIS1A_SALSA</name>